<keyword id="KW-0378">Hydrolase</keyword>
<keyword id="KW-1185">Reference proteome</keyword>
<keyword id="KW-0964">Secreted</keyword>
<keyword id="KW-0732">Signal</keyword>
<comment type="catalytic activity">
    <reaction>
        <text>a sphingomyelin + H2O = phosphocholine + an N-acylsphing-4-enine + H(+)</text>
        <dbReference type="Rhea" id="RHEA:19253"/>
        <dbReference type="ChEBI" id="CHEBI:15377"/>
        <dbReference type="ChEBI" id="CHEBI:15378"/>
        <dbReference type="ChEBI" id="CHEBI:17636"/>
        <dbReference type="ChEBI" id="CHEBI:52639"/>
        <dbReference type="ChEBI" id="CHEBI:295975"/>
        <dbReference type="EC" id="3.1.4.12"/>
    </reaction>
</comment>
<comment type="subcellular location">
    <subcellularLocation>
        <location evidence="1">Secreted</location>
    </subcellularLocation>
</comment>
<comment type="sequence caution" evidence="4">
    <conflict type="erroneous initiation">
        <sequence resource="EMBL-CDS" id="AAN48228"/>
    </conflict>
    <text>Truncated N-terminus.</text>
</comment>
<protein>
    <recommendedName>
        <fullName>Sphingomyelinase C 2</fullName>
        <ecNumber>3.1.4.12</ecNumber>
    </recommendedName>
    <alternativeName>
        <fullName>Sphingomyelin phosphodiesterase 2</fullName>
        <shortName>SMase 2</shortName>
    </alternativeName>
</protein>
<accession>P59116</accession>
<proteinExistence type="inferred from homology"/>
<name>PHL2_LEPIN</name>
<sequence length="623" mass="71030">MINKITKPKLLIGYYLLLFSLIRCLPEKESSYKDLFTSLLFLPNQTNSNQVNSVSINNDPANPNPVNPASANNNQVNAVPENDDPANLNPVNPASANSNQVNAAPENGSPADPNPANLASANNNQVNAVPANNYFTKEDSSNNIPKKVNSKNVEIKVLSHNVFMLPTNLPRWGNLGHDERAKRISKSDYVKNQDVIVFEEAFDTSARKILLDNLREEYPYQTDVVGRTKKNWDASLGNFRSYSLVNGGVVILSKWPIEEKIQYIFNDSGCGADWFANKGFVYVKINKEGKKFHVIGTHAQSQDQNCSNLGIPNRANQFDDIRNFIYSKNIPKDETVLIVGDLNVIKESNEYYDMISRLNVNEPRYVGVPFTWDAKTNEIAAYYYENEEPVYLDYIFVSKSHAQPPVWQNLAYDPVSKQTWTVSGYTSDEFSDHYPIYGFVYADPSTPTKSGHKKKYDQVSFQSAANGKYIQADPNRKNGWLKADAVIETDFTKFNLLQEGNLNPSCIKNGLVRIESSRFLNYFWNWWLGGGSGNYGYYSKFNDASNQLEIINLSDECLENGSKIVFKDYDTYSRNHYYLTVWDKGNWNEHLYLWKDSISQREIFYLKLNSTPVRNWSADLIYR</sequence>
<feature type="signal peptide" evidence="2">
    <location>
        <begin position="1"/>
        <end position="25"/>
    </location>
</feature>
<feature type="chain" id="PRO_0000022051" description="Sphingomyelinase C 2">
    <location>
        <begin position="26"/>
        <end position="623"/>
    </location>
</feature>
<feature type="region of interest" description="Disordered" evidence="3">
    <location>
        <begin position="51"/>
        <end position="121"/>
    </location>
</feature>
<feature type="compositionally biased region" description="Low complexity" evidence="3">
    <location>
        <begin position="51"/>
        <end position="61"/>
    </location>
</feature>
<feature type="compositionally biased region" description="Low complexity" evidence="3">
    <location>
        <begin position="67"/>
        <end position="80"/>
    </location>
</feature>
<feature type="compositionally biased region" description="Polar residues" evidence="3">
    <location>
        <begin position="89"/>
        <end position="102"/>
    </location>
</feature>
<feature type="compositionally biased region" description="Low complexity" evidence="3">
    <location>
        <begin position="110"/>
        <end position="121"/>
    </location>
</feature>
<reference key="1">
    <citation type="journal article" date="2003" name="Nature">
        <title>Unique physiological and pathogenic features of Leptospira interrogans revealed by whole-genome sequencing.</title>
        <authorList>
            <person name="Ren S.-X."/>
            <person name="Fu G."/>
            <person name="Jiang X.-G."/>
            <person name="Zeng R."/>
            <person name="Miao Y.-G."/>
            <person name="Xu H."/>
            <person name="Zhang Y.-X."/>
            <person name="Xiong H."/>
            <person name="Lu G."/>
            <person name="Lu L.-F."/>
            <person name="Jiang H.-Q."/>
            <person name="Jia J."/>
            <person name="Tu Y.-F."/>
            <person name="Jiang J.-X."/>
            <person name="Gu W.-Y."/>
            <person name="Zhang Y.-Q."/>
            <person name="Cai Z."/>
            <person name="Sheng H.-H."/>
            <person name="Yin H.-F."/>
            <person name="Zhang Y."/>
            <person name="Zhu G.-F."/>
            <person name="Wan M."/>
            <person name="Huang H.-L."/>
            <person name="Qian Z."/>
            <person name="Wang S.-Y."/>
            <person name="Ma W."/>
            <person name="Yao Z.-J."/>
            <person name="Shen Y."/>
            <person name="Qiang B.-Q."/>
            <person name="Xia Q.-C."/>
            <person name="Guo X.-K."/>
            <person name="Danchin A."/>
            <person name="Saint Girons I."/>
            <person name="Somerville R.L."/>
            <person name="Wen Y.-M."/>
            <person name="Shi M.-H."/>
            <person name="Chen Z."/>
            <person name="Xu J.-G."/>
            <person name="Zhao G.-P."/>
        </authorList>
    </citation>
    <scope>NUCLEOTIDE SEQUENCE [LARGE SCALE GENOMIC DNA]</scope>
    <source>
        <strain>56601</strain>
    </source>
</reference>
<organism>
    <name type="scientific">Leptospira interrogans serogroup Icterohaemorrhagiae serovar Lai (strain 56601)</name>
    <dbReference type="NCBI Taxonomy" id="189518"/>
    <lineage>
        <taxon>Bacteria</taxon>
        <taxon>Pseudomonadati</taxon>
        <taxon>Spirochaetota</taxon>
        <taxon>Spirochaetia</taxon>
        <taxon>Leptospirales</taxon>
        <taxon>Leptospiraceae</taxon>
        <taxon>Leptospira</taxon>
    </lineage>
</organism>
<gene>
    <name type="primary">sph2</name>
    <name type="ordered locus">LA_1029</name>
</gene>
<evidence type="ECO:0000250" key="1"/>
<evidence type="ECO:0000255" key="2"/>
<evidence type="ECO:0000256" key="3">
    <source>
        <dbReference type="SAM" id="MobiDB-lite"/>
    </source>
</evidence>
<evidence type="ECO:0000305" key="4"/>
<dbReference type="EC" id="3.1.4.12"/>
<dbReference type="EMBL" id="AE010300">
    <property type="protein sequence ID" value="AAN48228.2"/>
    <property type="status" value="ALT_INIT"/>
    <property type="molecule type" value="Genomic_DNA"/>
</dbReference>
<dbReference type="RefSeq" id="NP_711210.2">
    <property type="nucleotide sequence ID" value="NC_004342.2"/>
</dbReference>
<dbReference type="SMR" id="P59116"/>
<dbReference type="STRING" id="189518.LA_1029"/>
<dbReference type="PaxDb" id="189518-LA_1029"/>
<dbReference type="EnsemblBacteria" id="AAN48228">
    <property type="protein sequence ID" value="AAN48228"/>
    <property type="gene ID" value="LA_1029"/>
</dbReference>
<dbReference type="KEGG" id="lil:LA_1029"/>
<dbReference type="PATRIC" id="fig|189518.3.peg.1027"/>
<dbReference type="HOGENOM" id="CLU_489836_0_0_12"/>
<dbReference type="InParanoid" id="P59116"/>
<dbReference type="OrthoDB" id="338539at2"/>
<dbReference type="BRENDA" id="3.1.4.12">
    <property type="organism ID" value="2986"/>
</dbReference>
<dbReference type="Proteomes" id="UP000001408">
    <property type="component" value="Chromosome I"/>
</dbReference>
<dbReference type="GO" id="GO:0005576">
    <property type="term" value="C:extracellular region"/>
    <property type="evidence" value="ECO:0007669"/>
    <property type="project" value="UniProtKB-SubCell"/>
</dbReference>
<dbReference type="GO" id="GO:0004620">
    <property type="term" value="F:phospholipase activity"/>
    <property type="evidence" value="ECO:0000318"/>
    <property type="project" value="GO_Central"/>
</dbReference>
<dbReference type="GO" id="GO:0004767">
    <property type="term" value="F:sphingomyelin phosphodiesterase activity"/>
    <property type="evidence" value="ECO:0007669"/>
    <property type="project" value="UniProtKB-EC"/>
</dbReference>
<dbReference type="GO" id="GO:0033659">
    <property type="term" value="P:symbiont-mediated disruption of host mitochondrion"/>
    <property type="evidence" value="ECO:0000269"/>
    <property type="project" value="SigSci"/>
</dbReference>
<dbReference type="CDD" id="cd09078">
    <property type="entry name" value="nSMase"/>
    <property type="match status" value="1"/>
</dbReference>
<dbReference type="Gene3D" id="3.60.10.10">
    <property type="entry name" value="Endonuclease/exonuclease/phosphatase"/>
    <property type="match status" value="1"/>
</dbReference>
<dbReference type="InterPro" id="IPR036691">
    <property type="entry name" value="Endo/exonu/phosph_ase_sf"/>
</dbReference>
<dbReference type="InterPro" id="IPR005135">
    <property type="entry name" value="Endo/exonuclease/phosphatase"/>
</dbReference>
<dbReference type="InterPro" id="IPR038772">
    <property type="entry name" value="Sph/SMPD2-like"/>
</dbReference>
<dbReference type="InterPro" id="IPR017766">
    <property type="entry name" value="Sphingomyelinase/PLipase_C"/>
</dbReference>
<dbReference type="NCBIfam" id="TIGR03395">
    <property type="entry name" value="sphingomy"/>
    <property type="match status" value="1"/>
</dbReference>
<dbReference type="PANTHER" id="PTHR16320:SF23">
    <property type="entry name" value="SPHINGOMYELINASE C 1"/>
    <property type="match status" value="1"/>
</dbReference>
<dbReference type="PANTHER" id="PTHR16320">
    <property type="entry name" value="SPHINGOMYELINASE FAMILY MEMBER"/>
    <property type="match status" value="1"/>
</dbReference>
<dbReference type="Pfam" id="PF03372">
    <property type="entry name" value="Exo_endo_phos"/>
    <property type="match status" value="1"/>
</dbReference>
<dbReference type="SUPFAM" id="SSF56219">
    <property type="entry name" value="DNase I-like"/>
    <property type="match status" value="1"/>
</dbReference>